<protein>
    <recommendedName>
        <fullName evidence="1">A-type ATP synthase subunit E</fullName>
    </recommendedName>
</protein>
<keyword id="KW-0066">ATP synthesis</keyword>
<keyword id="KW-1003">Cell membrane</keyword>
<keyword id="KW-0375">Hydrogen ion transport</keyword>
<keyword id="KW-0406">Ion transport</keyword>
<keyword id="KW-0472">Membrane</keyword>
<keyword id="KW-0813">Transport</keyword>
<proteinExistence type="inferred from homology"/>
<evidence type="ECO:0000255" key="1">
    <source>
        <dbReference type="HAMAP-Rule" id="MF_00311"/>
    </source>
</evidence>
<gene>
    <name evidence="1" type="primary">atpE</name>
    <name type="ordered locus">MmarC7_0295</name>
</gene>
<reference key="1">
    <citation type="submission" date="2007-06" db="EMBL/GenBank/DDBJ databases">
        <title>Complete sequence of Methanococcus maripaludis C7.</title>
        <authorList>
            <consortium name="US DOE Joint Genome Institute"/>
            <person name="Copeland A."/>
            <person name="Lucas S."/>
            <person name="Lapidus A."/>
            <person name="Barry K."/>
            <person name="Glavina del Rio T."/>
            <person name="Dalin E."/>
            <person name="Tice H."/>
            <person name="Pitluck S."/>
            <person name="Clum A."/>
            <person name="Schmutz J."/>
            <person name="Larimer F."/>
            <person name="Land M."/>
            <person name="Hauser L."/>
            <person name="Kyrpides N."/>
            <person name="Anderson I."/>
            <person name="Sieprawska-Lupa M."/>
            <person name="Whitman W.B."/>
            <person name="Richardson P."/>
        </authorList>
    </citation>
    <scope>NUCLEOTIDE SEQUENCE [LARGE SCALE GENOMIC DNA]</scope>
    <source>
        <strain>C7 / ATCC BAA-1331</strain>
    </source>
</reference>
<sequence length="203" mass="22777">MGAEKITSKIVEDANKNAEKILAEALNEKEAILTEAKEEASKKEQAIAKKGEKDAEMTKNRILAEARLSAKKKLLEEREKTIQLTLEKLEEDLVKLPQKEEYKDILLKLIISGVYSVGGGELELLLNKKDFEVIDDSTLWALEKEMEDRLKKVTVLKKGEAKSIIGGCIIKTADKTKVSDNSLEATFERNLDSVRAKIAEMLF</sequence>
<dbReference type="EMBL" id="CP000745">
    <property type="protein sequence ID" value="ABR65365.1"/>
    <property type="molecule type" value="Genomic_DNA"/>
</dbReference>
<dbReference type="SMR" id="A6VFY9"/>
<dbReference type="STRING" id="426368.MmarC7_0295"/>
<dbReference type="KEGG" id="mmz:MmarC7_0295"/>
<dbReference type="eggNOG" id="arCOG00869">
    <property type="taxonomic scope" value="Archaea"/>
</dbReference>
<dbReference type="HOGENOM" id="CLU_105846_1_0_2"/>
<dbReference type="OrthoDB" id="4691at2157"/>
<dbReference type="GO" id="GO:0005886">
    <property type="term" value="C:plasma membrane"/>
    <property type="evidence" value="ECO:0007669"/>
    <property type="project" value="UniProtKB-SubCell"/>
</dbReference>
<dbReference type="GO" id="GO:0033178">
    <property type="term" value="C:proton-transporting two-sector ATPase complex, catalytic domain"/>
    <property type="evidence" value="ECO:0007669"/>
    <property type="project" value="InterPro"/>
</dbReference>
<dbReference type="GO" id="GO:0005524">
    <property type="term" value="F:ATP binding"/>
    <property type="evidence" value="ECO:0007669"/>
    <property type="project" value="UniProtKB-UniRule"/>
</dbReference>
<dbReference type="GO" id="GO:0046933">
    <property type="term" value="F:proton-transporting ATP synthase activity, rotational mechanism"/>
    <property type="evidence" value="ECO:0007669"/>
    <property type="project" value="UniProtKB-UniRule"/>
</dbReference>
<dbReference type="GO" id="GO:0046961">
    <property type="term" value="F:proton-transporting ATPase activity, rotational mechanism"/>
    <property type="evidence" value="ECO:0007669"/>
    <property type="project" value="InterPro"/>
</dbReference>
<dbReference type="GO" id="GO:0042777">
    <property type="term" value="P:proton motive force-driven plasma membrane ATP synthesis"/>
    <property type="evidence" value="ECO:0007669"/>
    <property type="project" value="UniProtKB-UniRule"/>
</dbReference>
<dbReference type="Gene3D" id="3.30.2320.30">
    <property type="entry name" value="ATP synthase, E subunit, C-terminal"/>
    <property type="match status" value="1"/>
</dbReference>
<dbReference type="Gene3D" id="1.20.5.620">
    <property type="entry name" value="F1F0 ATP synthase subunit B, membrane domain"/>
    <property type="match status" value="1"/>
</dbReference>
<dbReference type="HAMAP" id="MF_00311">
    <property type="entry name" value="ATP_synth_E_arch"/>
    <property type="match status" value="1"/>
</dbReference>
<dbReference type="InterPro" id="IPR038495">
    <property type="entry name" value="ATPase_E_C"/>
</dbReference>
<dbReference type="InterPro" id="IPR002842">
    <property type="entry name" value="ATPase_V1_Esu"/>
</dbReference>
<dbReference type="PANTHER" id="PTHR45715">
    <property type="entry name" value="ATPASE H+-TRANSPORTING V1 SUBUNIT E1A-RELATED"/>
    <property type="match status" value="1"/>
</dbReference>
<dbReference type="Pfam" id="PF01991">
    <property type="entry name" value="vATP-synt_E"/>
    <property type="match status" value="1"/>
</dbReference>
<dbReference type="SUPFAM" id="SSF160527">
    <property type="entry name" value="V-type ATPase subunit E-like"/>
    <property type="match status" value="1"/>
</dbReference>
<comment type="function">
    <text evidence="1">Component of the A-type ATP synthase that produces ATP from ADP in the presence of a proton gradient across the membrane.</text>
</comment>
<comment type="subunit">
    <text evidence="1">Has multiple subunits with at least A(3), B(3), C, D, E, F, H, I and proteolipid K(x).</text>
</comment>
<comment type="subcellular location">
    <subcellularLocation>
        <location evidence="1">Cell membrane</location>
        <topology evidence="1">Peripheral membrane protein</topology>
    </subcellularLocation>
</comment>
<comment type="similarity">
    <text evidence="1">Belongs to the V-ATPase E subunit family.</text>
</comment>
<name>AATE_METM7</name>
<feature type="chain" id="PRO_1000059414" description="A-type ATP synthase subunit E">
    <location>
        <begin position="1"/>
        <end position="203"/>
    </location>
</feature>
<organism>
    <name type="scientific">Methanococcus maripaludis (strain C7 / ATCC BAA-1331)</name>
    <dbReference type="NCBI Taxonomy" id="426368"/>
    <lineage>
        <taxon>Archaea</taxon>
        <taxon>Methanobacteriati</taxon>
        <taxon>Methanobacteriota</taxon>
        <taxon>Methanomada group</taxon>
        <taxon>Methanococci</taxon>
        <taxon>Methanococcales</taxon>
        <taxon>Methanococcaceae</taxon>
        <taxon>Methanococcus</taxon>
    </lineage>
</organism>
<accession>A6VFY9</accession>